<name>RRF_BACC7</name>
<proteinExistence type="inferred from homology"/>
<accession>B7HLF7</accession>
<reference key="1">
    <citation type="submission" date="2008-10" db="EMBL/GenBank/DDBJ databases">
        <title>Genome sequence of Bacillus cereus AH187.</title>
        <authorList>
            <person name="Dodson R.J."/>
            <person name="Durkin A.S."/>
            <person name="Rosovitz M.J."/>
            <person name="Rasko D.A."/>
            <person name="Kolsto A.B."/>
            <person name="Okstad O.A."/>
            <person name="Ravel J."/>
            <person name="Sutton G."/>
        </authorList>
    </citation>
    <scope>NUCLEOTIDE SEQUENCE [LARGE SCALE GENOMIC DNA]</scope>
    <source>
        <strain>AH187</strain>
    </source>
</reference>
<dbReference type="EMBL" id="CP001177">
    <property type="protein sequence ID" value="ACJ77581.1"/>
    <property type="molecule type" value="Genomic_DNA"/>
</dbReference>
<dbReference type="SMR" id="B7HLF7"/>
<dbReference type="KEGG" id="bcr:BCAH187_A3871"/>
<dbReference type="HOGENOM" id="CLU_073981_2_0_9"/>
<dbReference type="Proteomes" id="UP000002214">
    <property type="component" value="Chromosome"/>
</dbReference>
<dbReference type="GO" id="GO:0005737">
    <property type="term" value="C:cytoplasm"/>
    <property type="evidence" value="ECO:0007669"/>
    <property type="project" value="UniProtKB-SubCell"/>
</dbReference>
<dbReference type="GO" id="GO:0043023">
    <property type="term" value="F:ribosomal large subunit binding"/>
    <property type="evidence" value="ECO:0007669"/>
    <property type="project" value="TreeGrafter"/>
</dbReference>
<dbReference type="GO" id="GO:0006415">
    <property type="term" value="P:translational termination"/>
    <property type="evidence" value="ECO:0007669"/>
    <property type="project" value="UniProtKB-UniRule"/>
</dbReference>
<dbReference type="CDD" id="cd00520">
    <property type="entry name" value="RRF"/>
    <property type="match status" value="1"/>
</dbReference>
<dbReference type="FunFam" id="1.10.132.20:FF:000001">
    <property type="entry name" value="Ribosome-recycling factor"/>
    <property type="match status" value="1"/>
</dbReference>
<dbReference type="FunFam" id="3.30.1360.40:FF:000001">
    <property type="entry name" value="Ribosome-recycling factor"/>
    <property type="match status" value="1"/>
</dbReference>
<dbReference type="Gene3D" id="3.30.1360.40">
    <property type="match status" value="1"/>
</dbReference>
<dbReference type="Gene3D" id="1.10.132.20">
    <property type="entry name" value="Ribosome-recycling factor"/>
    <property type="match status" value="1"/>
</dbReference>
<dbReference type="HAMAP" id="MF_00040">
    <property type="entry name" value="RRF"/>
    <property type="match status" value="1"/>
</dbReference>
<dbReference type="InterPro" id="IPR002661">
    <property type="entry name" value="Ribosome_recyc_fac"/>
</dbReference>
<dbReference type="InterPro" id="IPR023584">
    <property type="entry name" value="Ribosome_recyc_fac_dom"/>
</dbReference>
<dbReference type="InterPro" id="IPR036191">
    <property type="entry name" value="RRF_sf"/>
</dbReference>
<dbReference type="NCBIfam" id="TIGR00496">
    <property type="entry name" value="frr"/>
    <property type="match status" value="1"/>
</dbReference>
<dbReference type="PANTHER" id="PTHR20982:SF3">
    <property type="entry name" value="MITOCHONDRIAL RIBOSOME RECYCLING FACTOR PSEUDO 1"/>
    <property type="match status" value="1"/>
</dbReference>
<dbReference type="PANTHER" id="PTHR20982">
    <property type="entry name" value="RIBOSOME RECYCLING FACTOR"/>
    <property type="match status" value="1"/>
</dbReference>
<dbReference type="Pfam" id="PF01765">
    <property type="entry name" value="RRF"/>
    <property type="match status" value="1"/>
</dbReference>
<dbReference type="SUPFAM" id="SSF55194">
    <property type="entry name" value="Ribosome recycling factor, RRF"/>
    <property type="match status" value="1"/>
</dbReference>
<organism>
    <name type="scientific">Bacillus cereus (strain AH187)</name>
    <dbReference type="NCBI Taxonomy" id="405534"/>
    <lineage>
        <taxon>Bacteria</taxon>
        <taxon>Bacillati</taxon>
        <taxon>Bacillota</taxon>
        <taxon>Bacilli</taxon>
        <taxon>Bacillales</taxon>
        <taxon>Bacillaceae</taxon>
        <taxon>Bacillus</taxon>
        <taxon>Bacillus cereus group</taxon>
    </lineage>
</organism>
<keyword id="KW-0963">Cytoplasm</keyword>
<keyword id="KW-0648">Protein biosynthesis</keyword>
<evidence type="ECO:0000255" key="1">
    <source>
        <dbReference type="HAMAP-Rule" id="MF_00040"/>
    </source>
</evidence>
<feature type="chain" id="PRO_1000194896" description="Ribosome-recycling factor">
    <location>
        <begin position="1"/>
        <end position="185"/>
    </location>
</feature>
<protein>
    <recommendedName>
        <fullName evidence="1">Ribosome-recycling factor</fullName>
        <shortName evidence="1">RRF</shortName>
    </recommendedName>
    <alternativeName>
        <fullName evidence="1">Ribosome-releasing factor</fullName>
    </alternativeName>
</protein>
<gene>
    <name evidence="1" type="primary">frr</name>
    <name type="ordered locus">BCAH187_A3871</name>
</gene>
<sequence>MGQQVLKSANEKMEKAVAAYSRELATVRAGRANASVLDKVQVDYYGAPTPVVQLANITVPEARLLVIQPYDKTSIGDIEKAILKADLGLNPSNDGTVIRIAFPALTEERRRDLVKVVKKYAEEAKVAVRNVRRDGNDDLKKLEKAGEITEDDLRGYTEDIQKETDKYIAKVDEIAKNKEKEIMEV</sequence>
<comment type="function">
    <text evidence="1">Responsible for the release of ribosomes from messenger RNA at the termination of protein biosynthesis. May increase the efficiency of translation by recycling ribosomes from one round of translation to another.</text>
</comment>
<comment type="subcellular location">
    <subcellularLocation>
        <location evidence="1">Cytoplasm</location>
    </subcellularLocation>
</comment>
<comment type="similarity">
    <text evidence="1">Belongs to the RRF family.</text>
</comment>